<organism>
    <name type="scientific">Penaeus setiferus</name>
    <name type="common">Atlantic white shrimp</name>
    <name type="synonym">Litopenaeus setiferus</name>
    <dbReference type="NCBI Taxonomy" id="64468"/>
    <lineage>
        <taxon>Eukaryota</taxon>
        <taxon>Metazoa</taxon>
        <taxon>Ecdysozoa</taxon>
        <taxon>Arthropoda</taxon>
        <taxon>Crustacea</taxon>
        <taxon>Multicrustacea</taxon>
        <taxon>Malacostraca</taxon>
        <taxon>Eumalacostraca</taxon>
        <taxon>Eucarida</taxon>
        <taxon>Decapoda</taxon>
        <taxon>Dendrobranchiata</taxon>
        <taxon>Penaeoidea</taxon>
        <taxon>Penaeidae</taxon>
        <taxon>Penaeus</taxon>
    </lineage>
</organism>
<keyword id="KW-0027">Amidation</keyword>
<keyword id="KW-0044">Antibiotic</keyword>
<keyword id="KW-0929">Antimicrobial</keyword>
<keyword id="KW-0147">Chitin-binding</keyword>
<keyword id="KW-1015">Disulfide bond</keyword>
<keyword id="KW-0295">Fungicide</keyword>
<keyword id="KW-0873">Pyrrolidone carboxylic acid</keyword>
<keyword id="KW-0732">Signal</keyword>
<proteinExistence type="inferred from homology"/>
<feature type="signal peptide" evidence="2">
    <location>
        <begin position="1"/>
        <end position="21"/>
    </location>
</feature>
<feature type="chain" id="PRO_0000023505" description="Penaeidin-2d">
    <location>
        <begin position="22"/>
        <end position="71"/>
    </location>
</feature>
<feature type="modified residue" description="Pyrrolidone carboxylic acid" evidence="1">
    <location>
        <position position="22"/>
    </location>
</feature>
<feature type="modified residue" description="Lysine amide" evidence="1">
    <location>
        <position position="71"/>
    </location>
</feature>
<feature type="disulfide bond" evidence="1">
    <location>
        <begin position="45"/>
        <end position="59"/>
    </location>
</feature>
<feature type="disulfide bond" evidence="1">
    <location>
        <begin position="48"/>
        <end position="66"/>
    </location>
</feature>
<feature type="disulfide bond" evidence="1">
    <location>
        <begin position="60"/>
        <end position="67"/>
    </location>
</feature>
<name>PEN2D_PENST</name>
<reference key="1">
    <citation type="journal article" date="2002" name="Immunogenetics">
        <title>Diversity of the penaeidin antimicrobial peptides in two shrimp species.</title>
        <authorList>
            <person name="Cuthbertson B.J."/>
            <person name="Shepard E.F."/>
            <person name="Chapman R.W."/>
            <person name="Gross P.S."/>
        </authorList>
    </citation>
    <scope>NUCLEOTIDE SEQUENCE [MRNA]</scope>
    <source>
        <tissue>Hemocyte</tissue>
    </source>
</reference>
<dbReference type="EMBL" id="AY039205">
    <property type="protein sequence ID" value="AAK83453.1"/>
    <property type="molecule type" value="mRNA"/>
</dbReference>
<dbReference type="SMR" id="Q962A9"/>
<dbReference type="GO" id="GO:0005737">
    <property type="term" value="C:cytoplasm"/>
    <property type="evidence" value="ECO:0007669"/>
    <property type="project" value="InterPro"/>
</dbReference>
<dbReference type="GO" id="GO:0008061">
    <property type="term" value="F:chitin binding"/>
    <property type="evidence" value="ECO:0007669"/>
    <property type="project" value="UniProtKB-KW"/>
</dbReference>
<dbReference type="GO" id="GO:0042742">
    <property type="term" value="P:defense response to bacterium"/>
    <property type="evidence" value="ECO:0007669"/>
    <property type="project" value="UniProtKB-KW"/>
</dbReference>
<dbReference type="GO" id="GO:0050832">
    <property type="term" value="P:defense response to fungus"/>
    <property type="evidence" value="ECO:0007669"/>
    <property type="project" value="UniProtKB-KW"/>
</dbReference>
<dbReference type="GO" id="GO:0031640">
    <property type="term" value="P:killing of cells of another organism"/>
    <property type="evidence" value="ECO:0007669"/>
    <property type="project" value="UniProtKB-KW"/>
</dbReference>
<dbReference type="InterPro" id="IPR009226">
    <property type="entry name" value="Penaeidin"/>
</dbReference>
<dbReference type="Pfam" id="PF05927">
    <property type="entry name" value="Penaeidin"/>
    <property type="match status" value="1"/>
</dbReference>
<evidence type="ECO:0000250" key="1"/>
<evidence type="ECO:0000255" key="2"/>
<evidence type="ECO:0000305" key="3"/>
<protein>
    <recommendedName>
        <fullName>Penaeidin-2d</fullName>
        <shortName>Pen-2d</shortName>
    </recommendedName>
</protein>
<sequence length="72" mass="7717">MRLVVCLVFLASFALVCQGGAQRGGFTGPIPRPPPHGRPPLGPICNACYRLSFSDVRICCNFLGKCCHLVKG</sequence>
<comment type="function">
    <text evidence="1">Antibacterial and antifungal activity. Presents chitin-binding activity (By similarity).</text>
</comment>
<comment type="subcellular location">
    <subcellularLocation>
        <location>Cytoplasmic granule</location>
    </subcellularLocation>
    <text>Cytoplasmic granules of hemocytes and to a lesser extent in small granules of hemocytes.</text>
</comment>
<comment type="similarity">
    <text evidence="3">Belongs to the penaeidin family.</text>
</comment>
<accession>Q962A9</accession>